<accession>D2Y237</accession>
<proteinExistence type="evidence at protein level"/>
<reference key="1">
    <citation type="journal article" date="2010" name="J. Proteome Res.">
        <title>Molecular diversification of peptide toxins from the tarantula Haplopelma hainanum (Ornithoctonus hainana) venom based on transcriptomic, peptidomic, and genomic analyses.</title>
        <authorList>
            <person name="Tang X."/>
            <person name="Zhang Y."/>
            <person name="Hu W."/>
            <person name="Xu D."/>
            <person name="Tao H."/>
            <person name="Yang X."/>
            <person name="Li Y."/>
            <person name="Jiang L."/>
            <person name="Liang S."/>
        </authorList>
    </citation>
    <scope>NUCLEOTIDE SEQUENCE [LARGE SCALE GENOMIC DNA / MRNA]</scope>
    <scope>PROTEIN SEQUENCE OF 51-85</scope>
    <scope>IDENTIFICATION BY MASS SPECTROMETRY</scope>
    <source>
        <tissue>Venom</tissue>
        <tissue>Venom gland</tissue>
    </source>
</reference>
<feature type="signal peptide" evidence="2">
    <location>
        <begin position="1"/>
        <end position="21"/>
    </location>
</feature>
<feature type="propeptide" id="PRO_0000400657" evidence="3">
    <location>
        <begin position="22"/>
        <end position="50"/>
    </location>
</feature>
<feature type="peptide" id="PRO_0000400658" description="Omega-theraphotoxin-Hhn1a 1">
    <location>
        <begin position="51"/>
        <end position="86"/>
    </location>
</feature>
<feature type="disulfide bond" evidence="1">
    <location>
        <begin position="52"/>
        <end position="66"/>
    </location>
</feature>
<feature type="disulfide bond" evidence="1">
    <location>
        <begin position="59"/>
        <end position="71"/>
    </location>
</feature>
<feature type="disulfide bond" evidence="1">
    <location>
        <begin position="65"/>
        <end position="78"/>
    </location>
</feature>
<evidence type="ECO:0000250" key="1"/>
<evidence type="ECO:0000255" key="2"/>
<evidence type="ECO:0000269" key="3">
    <source>
    </source>
</evidence>
<evidence type="ECO:0000305" key="4"/>
<comment type="function">
    <text evidence="1">Ion channel inhibitor.</text>
</comment>
<comment type="subcellular location">
    <subcellularLocation>
        <location>Secreted</location>
    </subcellularLocation>
</comment>
<comment type="tissue specificity">
    <text>Expressed by the venom gland.</text>
</comment>
<comment type="domain">
    <text evidence="1">The presence of a 'disulfide through disulfide knot' structurally defines this protein as a knottin.</text>
</comment>
<comment type="similarity">
    <text evidence="4">Belongs to the neurotoxin 10 (Hwtx-1) family. 17 (Hntx-9) subfamily.</text>
</comment>
<protein>
    <recommendedName>
        <fullName>Omega-theraphotoxin-Hhn1a 1</fullName>
        <shortName>Omega-TRTX-Hhn1a</shortName>
    </recommendedName>
    <alternativeName>
        <fullName>Hainantoxin-IX-2</fullName>
        <shortName>HNTX-IX-2</shortName>
    </alternativeName>
    <alternativeName>
        <fullName>Peptide F1-30.82</fullName>
    </alternativeName>
</protein>
<organism>
    <name type="scientific">Cyriopagopus hainanus</name>
    <name type="common">Chinese bird spider</name>
    <name type="synonym">Haplopelma hainanum</name>
    <dbReference type="NCBI Taxonomy" id="209901"/>
    <lineage>
        <taxon>Eukaryota</taxon>
        <taxon>Metazoa</taxon>
        <taxon>Ecdysozoa</taxon>
        <taxon>Arthropoda</taxon>
        <taxon>Chelicerata</taxon>
        <taxon>Arachnida</taxon>
        <taxon>Araneae</taxon>
        <taxon>Mygalomorphae</taxon>
        <taxon>Theraphosidae</taxon>
        <taxon>Haplopelma</taxon>
    </lineage>
</organism>
<dbReference type="EMBL" id="GU292914">
    <property type="protein sequence ID" value="ADB56730.1"/>
    <property type="molecule type" value="mRNA"/>
</dbReference>
<dbReference type="EMBL" id="GU293091">
    <property type="protein sequence ID" value="ADB56907.1"/>
    <property type="molecule type" value="Genomic_DNA"/>
</dbReference>
<dbReference type="SMR" id="D2Y237"/>
<dbReference type="ArachnoServer" id="AS001912">
    <property type="toxin name" value="omega-theraphotoxin-Hhn1a"/>
</dbReference>
<dbReference type="GO" id="GO:0005576">
    <property type="term" value="C:extracellular region"/>
    <property type="evidence" value="ECO:0007669"/>
    <property type="project" value="UniProtKB-SubCell"/>
</dbReference>
<dbReference type="GO" id="GO:0008200">
    <property type="term" value="F:ion channel inhibitor activity"/>
    <property type="evidence" value="ECO:0007669"/>
    <property type="project" value="InterPro"/>
</dbReference>
<dbReference type="GO" id="GO:0090729">
    <property type="term" value="F:toxin activity"/>
    <property type="evidence" value="ECO:0007669"/>
    <property type="project" value="UniProtKB-KW"/>
</dbReference>
<dbReference type="InterPro" id="IPR011696">
    <property type="entry name" value="Huwentoxin-1"/>
</dbReference>
<dbReference type="InterPro" id="IPR013140">
    <property type="entry name" value="Huwentoxin_CS1"/>
</dbReference>
<dbReference type="Pfam" id="PF07740">
    <property type="entry name" value="Toxin_12"/>
    <property type="match status" value="1"/>
</dbReference>
<dbReference type="SUPFAM" id="SSF57059">
    <property type="entry name" value="omega toxin-like"/>
    <property type="match status" value="1"/>
</dbReference>
<dbReference type="PROSITE" id="PS60021">
    <property type="entry name" value="HWTX_1"/>
    <property type="match status" value="1"/>
</dbReference>
<sequence>MKSIVFVALFGLALLAVVCSASEDAHKELLKEVVRAMVVDKTDAVQAEERECRWYLGGCSQDGDCCKHLQCHSNYEWCVWDGTFSK</sequence>
<keyword id="KW-0903">Direct protein sequencing</keyword>
<keyword id="KW-1015">Disulfide bond</keyword>
<keyword id="KW-0872">Ion channel impairing toxin</keyword>
<keyword id="KW-0960">Knottin</keyword>
<keyword id="KW-0964">Secreted</keyword>
<keyword id="KW-0732">Signal</keyword>
<keyword id="KW-0800">Toxin</keyword>
<name>H9B01_CYRHA</name>